<organism>
    <name type="scientific">Bos taurus</name>
    <name type="common">Bovine</name>
    <dbReference type="NCBI Taxonomy" id="9913"/>
    <lineage>
        <taxon>Eukaryota</taxon>
        <taxon>Metazoa</taxon>
        <taxon>Chordata</taxon>
        <taxon>Craniata</taxon>
        <taxon>Vertebrata</taxon>
        <taxon>Euteleostomi</taxon>
        <taxon>Mammalia</taxon>
        <taxon>Eutheria</taxon>
        <taxon>Laurasiatheria</taxon>
        <taxon>Artiodactyla</taxon>
        <taxon>Ruminantia</taxon>
        <taxon>Pecora</taxon>
        <taxon>Bovidae</taxon>
        <taxon>Bovinae</taxon>
        <taxon>Bos</taxon>
    </lineage>
</organism>
<dbReference type="EMBL" id="U51437">
    <property type="protein sequence ID" value="AAC48523.1"/>
    <property type="molecule type" value="mRNA"/>
</dbReference>
<dbReference type="RefSeq" id="NP_776361.1">
    <property type="nucleotide sequence ID" value="NM_173936.2"/>
</dbReference>
<dbReference type="SMR" id="Q28038"/>
<dbReference type="FunCoup" id="Q28038">
    <property type="interactions" value="39"/>
</dbReference>
<dbReference type="STRING" id="9913.ENSBTAP00000011964"/>
<dbReference type="PaxDb" id="9913-ENSBTAP00000011964"/>
<dbReference type="Ensembl" id="ENSBTAT00000011964.2">
    <property type="protein sequence ID" value="ENSBTAP00000011964.1"/>
    <property type="gene ID" value="ENSBTAG00000009078.4"/>
</dbReference>
<dbReference type="GeneID" id="280857"/>
<dbReference type="KEGG" id="bta:280857"/>
<dbReference type="CTD" id="8190"/>
<dbReference type="VEuPathDB" id="HostDB:ENSBTAG00000009078"/>
<dbReference type="eggNOG" id="ENOG502S2XN">
    <property type="taxonomic scope" value="Eukaryota"/>
</dbReference>
<dbReference type="GeneTree" id="ENSGT00950000182767"/>
<dbReference type="HOGENOM" id="CLU_158739_0_0_1"/>
<dbReference type="InParanoid" id="Q28038"/>
<dbReference type="OMA" id="VVQENQY"/>
<dbReference type="OrthoDB" id="6627676at2759"/>
<dbReference type="TreeFam" id="TF332724"/>
<dbReference type="Proteomes" id="UP000009136">
    <property type="component" value="Chromosome 18"/>
</dbReference>
<dbReference type="Bgee" id="ENSBTAG00000009078">
    <property type="expression patterns" value="Expressed in laryngeal cartilage and 100 other cell types or tissues"/>
</dbReference>
<dbReference type="GO" id="GO:0005576">
    <property type="term" value="C:extracellular region"/>
    <property type="evidence" value="ECO:0007669"/>
    <property type="project" value="UniProtKB-SubCell"/>
</dbReference>
<dbReference type="GO" id="GO:0008083">
    <property type="term" value="F:growth factor activity"/>
    <property type="evidence" value="ECO:0007669"/>
    <property type="project" value="UniProtKB-KW"/>
</dbReference>
<dbReference type="GO" id="GO:0030198">
    <property type="term" value="P:extracellular matrix organization"/>
    <property type="evidence" value="ECO:0000318"/>
    <property type="project" value="GO_Central"/>
</dbReference>
<dbReference type="FunFam" id="2.30.30.40:FF:000175">
    <property type="entry name" value="Melanoma-derived growth regulatory protein"/>
    <property type="match status" value="1"/>
</dbReference>
<dbReference type="Gene3D" id="2.30.30.40">
    <property type="entry name" value="SH3 Domains"/>
    <property type="match status" value="1"/>
</dbReference>
<dbReference type="InterPro" id="IPR043369">
    <property type="entry name" value="MIA"/>
</dbReference>
<dbReference type="InterPro" id="IPR036028">
    <property type="entry name" value="SH3-like_dom_sf"/>
</dbReference>
<dbReference type="InterPro" id="IPR001452">
    <property type="entry name" value="SH3_domain"/>
</dbReference>
<dbReference type="PANTHER" id="PTHR47312">
    <property type="entry name" value="MELANOMA-DERIVED GROWTH REGULATORY PROTEIN"/>
    <property type="match status" value="1"/>
</dbReference>
<dbReference type="PANTHER" id="PTHR47312:SF1">
    <property type="entry name" value="MELANOMA-DERIVED GROWTH REGULATORY PROTEIN"/>
    <property type="match status" value="1"/>
</dbReference>
<dbReference type="Pfam" id="PF07653">
    <property type="entry name" value="SH3_2"/>
    <property type="match status" value="1"/>
</dbReference>
<dbReference type="SMART" id="SM00326">
    <property type="entry name" value="SH3"/>
    <property type="match status" value="1"/>
</dbReference>
<dbReference type="SUPFAM" id="SSF50044">
    <property type="entry name" value="SH3-domain"/>
    <property type="match status" value="1"/>
</dbReference>
<dbReference type="PROSITE" id="PS50002">
    <property type="entry name" value="SH3"/>
    <property type="match status" value="1"/>
</dbReference>
<sequence>MAWSLVFLGVVLLSAFPGPSAGGRPMPKLADRKMCADEECSHPISVAVALQDYVAPDCRFLTIHQGQVVYIFSKLKGRGRLFWGGSVQGDYYGDGAARLGYFPSSIVREDQTLKPAKTDVKTDIWDFYCQ</sequence>
<evidence type="ECO:0000250" key="1"/>
<evidence type="ECO:0000255" key="2">
    <source>
        <dbReference type="PROSITE-ProRule" id="PRU00192"/>
    </source>
</evidence>
<evidence type="ECO:0000305" key="3"/>
<keyword id="KW-1015">Disulfide bond</keyword>
<keyword id="KW-0339">Growth factor</keyword>
<keyword id="KW-1185">Reference proteome</keyword>
<keyword id="KW-0964">Secreted</keyword>
<keyword id="KW-0728">SH3 domain</keyword>
<keyword id="KW-0732">Signal</keyword>
<gene>
    <name type="primary">MIA</name>
    <name type="synonym">CDRAP</name>
</gene>
<name>MIA_BOVIN</name>
<protein>
    <recommendedName>
        <fullName>Melanoma-derived growth regulatory protein</fullName>
    </recommendedName>
    <alternativeName>
        <fullName>Cartilage-derived retinoic acid-sensitive protein</fullName>
        <shortName>CD-RAP</shortName>
    </alternativeName>
    <alternativeName>
        <fullName>Melanoma inhibitory activity protein</fullName>
    </alternativeName>
</protein>
<reference key="1">
    <citation type="journal article" date="1996" name="J. Biol. Chem.">
        <title>Cloning of a retinoic acid-sensitive mRNA expressed in cartilage and during chondrogenesis.</title>
        <authorList>
            <person name="Dietz U.H."/>
            <person name="Sandell L.J."/>
        </authorList>
    </citation>
    <scope>NUCLEOTIDE SEQUENCE [MRNA]</scope>
</reference>
<feature type="signal peptide" evidence="1">
    <location>
        <begin position="1"/>
        <end position="22"/>
    </location>
</feature>
<feature type="chain" id="PRO_0000019027" description="Melanoma-derived growth regulatory protein">
    <location>
        <begin position="23"/>
        <end position="130"/>
    </location>
</feature>
<feature type="domain" description="SH3" evidence="2">
    <location>
        <begin position="42"/>
        <end position="112"/>
    </location>
</feature>
<feature type="disulfide bond" evidence="1">
    <location>
        <begin position="35"/>
        <end position="40"/>
    </location>
</feature>
<feature type="disulfide bond" evidence="1">
    <location>
        <begin position="58"/>
        <end position="129"/>
    </location>
</feature>
<comment type="function">
    <text>May function during cartilage development and maintenance.</text>
</comment>
<comment type="subunit">
    <text evidence="1">Interacts with FASLG.</text>
</comment>
<comment type="subcellular location">
    <subcellularLocation>
        <location>Secreted</location>
    </subcellularLocation>
</comment>
<comment type="tissue specificity">
    <text>Cartilage primordia and cartilage.</text>
</comment>
<comment type="induction">
    <text>Repressed by retinoic acid.</text>
</comment>
<comment type="PTM">
    <text>May contain two intramolecular disulfide bonds.</text>
</comment>
<comment type="similarity">
    <text evidence="3">Belongs to the MIA/OTOR family.</text>
</comment>
<accession>Q28038</accession>
<proteinExistence type="evidence at transcript level"/>